<organism>
    <name type="scientific">Arabidopsis thaliana</name>
    <name type="common">Mouse-ear cress</name>
    <dbReference type="NCBI Taxonomy" id="3702"/>
    <lineage>
        <taxon>Eukaryota</taxon>
        <taxon>Viridiplantae</taxon>
        <taxon>Streptophyta</taxon>
        <taxon>Embryophyta</taxon>
        <taxon>Tracheophyta</taxon>
        <taxon>Spermatophyta</taxon>
        <taxon>Magnoliopsida</taxon>
        <taxon>eudicotyledons</taxon>
        <taxon>Gunneridae</taxon>
        <taxon>Pentapetalae</taxon>
        <taxon>rosids</taxon>
        <taxon>malvids</taxon>
        <taxon>Brassicales</taxon>
        <taxon>Brassicaceae</taxon>
        <taxon>Camelineae</taxon>
        <taxon>Arabidopsis</taxon>
    </lineage>
</organism>
<evidence type="ECO:0000255" key="1"/>
<evidence type="ECO:0000256" key="2">
    <source>
        <dbReference type="SAM" id="MobiDB-lite"/>
    </source>
</evidence>
<evidence type="ECO:0000305" key="3"/>
<dbReference type="EMBL" id="L15229">
    <property type="protein sequence ID" value="AAA61781.1"/>
    <property type="molecule type" value="Genomic_DNA"/>
</dbReference>
<dbReference type="EMBL" id="AC002986">
    <property type="protein sequence ID" value="AAC17051.1"/>
    <property type="molecule type" value="Genomic_DNA"/>
</dbReference>
<dbReference type="EMBL" id="CP002684">
    <property type="protein sequence ID" value="AEE36197.1"/>
    <property type="molecule type" value="Genomic_DNA"/>
</dbReference>
<dbReference type="EMBL" id="AY050885">
    <property type="protein sequence ID" value="AAK92822.1"/>
    <property type="molecule type" value="mRNA"/>
</dbReference>
<dbReference type="EMBL" id="AY113960">
    <property type="protein sequence ID" value="AAM45008.1"/>
    <property type="molecule type" value="mRNA"/>
</dbReference>
<dbReference type="EMBL" id="M98039">
    <property type="protein sequence ID" value="AAA32855.1"/>
    <property type="molecule type" value="mRNA"/>
</dbReference>
<dbReference type="PIR" id="A46259">
    <property type="entry name" value="A46259"/>
</dbReference>
<dbReference type="PIR" id="T01050">
    <property type="entry name" value="T01050"/>
</dbReference>
<dbReference type="RefSeq" id="NP_565198.1">
    <molecule id="Q39199-1"/>
    <property type="nucleotide sequence ID" value="NM_106556.2"/>
</dbReference>
<dbReference type="SMR" id="Q39199"/>
<dbReference type="FunCoup" id="Q39199">
    <property type="interactions" value="176"/>
</dbReference>
<dbReference type="STRING" id="3702.Q39199"/>
<dbReference type="iPTMnet" id="Q39199"/>
<dbReference type="PaxDb" id="3702-AT1G79050.1"/>
<dbReference type="ProteomicsDB" id="236869">
    <molecule id="Q39199-1"/>
</dbReference>
<dbReference type="EnsemblPlants" id="AT1G79050.1">
    <molecule id="Q39199-1"/>
    <property type="protein sequence ID" value="AT1G79050.1"/>
    <property type="gene ID" value="AT1G79050"/>
</dbReference>
<dbReference type="GeneID" id="844246"/>
<dbReference type="Gramene" id="AT1G79050.1">
    <molecule id="Q39199-1"/>
    <property type="protein sequence ID" value="AT1G79050.1"/>
    <property type="gene ID" value="AT1G79050"/>
</dbReference>
<dbReference type="KEGG" id="ath:AT1G79050"/>
<dbReference type="Araport" id="AT1G79050"/>
<dbReference type="TAIR" id="AT1G79050">
    <property type="gene designation" value="RECA1"/>
</dbReference>
<dbReference type="eggNOG" id="KOG1433">
    <property type="taxonomic scope" value="Eukaryota"/>
</dbReference>
<dbReference type="InParanoid" id="Q39199"/>
<dbReference type="OMA" id="VCQPETG"/>
<dbReference type="PhylomeDB" id="Q39199"/>
<dbReference type="PRO" id="PR:Q39199"/>
<dbReference type="Proteomes" id="UP000006548">
    <property type="component" value="Chromosome 1"/>
</dbReference>
<dbReference type="ExpressionAtlas" id="Q39199">
    <property type="expression patterns" value="baseline and differential"/>
</dbReference>
<dbReference type="GO" id="GO:0009570">
    <property type="term" value="C:chloroplast stroma"/>
    <property type="evidence" value="ECO:0007669"/>
    <property type="project" value="UniProtKB-SubCell"/>
</dbReference>
<dbReference type="GO" id="GO:0005524">
    <property type="term" value="F:ATP binding"/>
    <property type="evidence" value="ECO:0007669"/>
    <property type="project" value="UniProtKB-KW"/>
</dbReference>
<dbReference type="GO" id="GO:0016887">
    <property type="term" value="F:ATP hydrolysis activity"/>
    <property type="evidence" value="ECO:0007669"/>
    <property type="project" value="InterPro"/>
</dbReference>
<dbReference type="GO" id="GO:0140664">
    <property type="term" value="F:ATP-dependent DNA damage sensor activity"/>
    <property type="evidence" value="ECO:0007669"/>
    <property type="project" value="InterPro"/>
</dbReference>
<dbReference type="GO" id="GO:0003697">
    <property type="term" value="F:single-stranded DNA binding"/>
    <property type="evidence" value="ECO:0007669"/>
    <property type="project" value="InterPro"/>
</dbReference>
<dbReference type="GO" id="GO:0006974">
    <property type="term" value="P:DNA damage response"/>
    <property type="evidence" value="ECO:0000315"/>
    <property type="project" value="TAIR"/>
</dbReference>
<dbReference type="GO" id="GO:0006310">
    <property type="term" value="P:DNA recombination"/>
    <property type="evidence" value="ECO:0007669"/>
    <property type="project" value="UniProtKB-KW"/>
</dbReference>
<dbReference type="GO" id="GO:0006281">
    <property type="term" value="P:DNA repair"/>
    <property type="evidence" value="ECO:0007669"/>
    <property type="project" value="InterPro"/>
</dbReference>
<dbReference type="CDD" id="cd00983">
    <property type="entry name" value="RecA"/>
    <property type="match status" value="1"/>
</dbReference>
<dbReference type="FunFam" id="3.40.50.300:FF:001362">
    <property type="entry name" value="DNA repair protein recA 1 like"/>
    <property type="match status" value="1"/>
</dbReference>
<dbReference type="Gene3D" id="3.40.50.300">
    <property type="entry name" value="P-loop containing nucleotide triphosphate hydrolases"/>
    <property type="match status" value="1"/>
</dbReference>
<dbReference type="HAMAP" id="MF_00268">
    <property type="entry name" value="RecA"/>
    <property type="match status" value="1"/>
</dbReference>
<dbReference type="InterPro" id="IPR003593">
    <property type="entry name" value="AAA+_ATPase"/>
</dbReference>
<dbReference type="InterPro" id="IPR013765">
    <property type="entry name" value="DNA_recomb/repair_RecA"/>
</dbReference>
<dbReference type="InterPro" id="IPR020584">
    <property type="entry name" value="DNA_recomb/repair_RecA_CS"/>
</dbReference>
<dbReference type="InterPro" id="IPR027417">
    <property type="entry name" value="P-loop_NTPase"/>
</dbReference>
<dbReference type="InterPro" id="IPR049261">
    <property type="entry name" value="RecA-like_C"/>
</dbReference>
<dbReference type="InterPro" id="IPR049428">
    <property type="entry name" value="RecA-like_N"/>
</dbReference>
<dbReference type="InterPro" id="IPR020588">
    <property type="entry name" value="RecA_ATP-bd"/>
</dbReference>
<dbReference type="InterPro" id="IPR023400">
    <property type="entry name" value="RecA_C_sf"/>
</dbReference>
<dbReference type="InterPro" id="IPR020587">
    <property type="entry name" value="RecA_monomer-monomer_interface"/>
</dbReference>
<dbReference type="NCBIfam" id="TIGR02012">
    <property type="entry name" value="tigrfam_recA"/>
    <property type="match status" value="1"/>
</dbReference>
<dbReference type="PANTHER" id="PTHR45900:SF1">
    <property type="entry name" value="MITOCHONDRIAL DNA REPAIR PROTEIN RECA HOMOLOG-RELATED"/>
    <property type="match status" value="1"/>
</dbReference>
<dbReference type="PANTHER" id="PTHR45900">
    <property type="entry name" value="RECA"/>
    <property type="match status" value="1"/>
</dbReference>
<dbReference type="Pfam" id="PF00154">
    <property type="entry name" value="RecA"/>
    <property type="match status" value="1"/>
</dbReference>
<dbReference type="Pfam" id="PF21096">
    <property type="entry name" value="RecA_C"/>
    <property type="match status" value="1"/>
</dbReference>
<dbReference type="PRINTS" id="PR00142">
    <property type="entry name" value="RECA"/>
</dbReference>
<dbReference type="SMART" id="SM00382">
    <property type="entry name" value="AAA"/>
    <property type="match status" value="1"/>
</dbReference>
<dbReference type="SUPFAM" id="SSF52540">
    <property type="entry name" value="P-loop containing nucleoside triphosphate hydrolases"/>
    <property type="match status" value="1"/>
</dbReference>
<dbReference type="SUPFAM" id="SSF54752">
    <property type="entry name" value="RecA protein, C-terminal domain"/>
    <property type="match status" value="1"/>
</dbReference>
<dbReference type="PROSITE" id="PS00321">
    <property type="entry name" value="RECA_1"/>
    <property type="match status" value="1"/>
</dbReference>
<dbReference type="PROSITE" id="PS50162">
    <property type="entry name" value="RECA_2"/>
    <property type="match status" value="1"/>
</dbReference>
<dbReference type="PROSITE" id="PS50163">
    <property type="entry name" value="RECA_3"/>
    <property type="match status" value="1"/>
</dbReference>
<proteinExistence type="evidence at transcript level"/>
<protein>
    <recommendedName>
        <fullName>DNA repair protein recA homolog 1, chloroplastic</fullName>
    </recommendedName>
    <alternativeName>
        <fullName>Recombinase A homolog 1</fullName>
    </alternativeName>
</protein>
<sequence>MDSQLVLSLKLNPSFTPLSPLFPFTPCSSFSPSLRFSSCYSRRLYSPVTVYAAKKLSHKISSEFDDRINGALSPDADSRFLDRQKALEAAMNDINSSFGKGSVTRLGSAGGALVETFSSGILTLDLALGGGLPKGRVVEIYGPESSGKTTLALHAIAEVQKLGGNAMLVDAEHAFDPAYSKALGVDVENLIVCQPDNGEMALETADRMCRSGAVDLICVDSVSALTPRAEIEGEIGMQQMGLQARLMSQALRKMSGNASKAGCTLIFLNQIRYKIGVYYGNPEVTSGGIALKFFASVRLEIRSAGKIKSSKGDEDIGLRARVRVQKSKVSRPYKQAEFEIMFGEGVSKLGCVLDCAEIMEVVVKKGSWYSYEDQRLGQGREKALQHLRENPALQDEIEKKVRLLMLDGEVHRSTPLMSSSSSSASHREEEEEDSLDDFQ</sequence>
<keyword id="KW-0025">Alternative splicing</keyword>
<keyword id="KW-0067">ATP-binding</keyword>
<keyword id="KW-0150">Chloroplast</keyword>
<keyword id="KW-0227">DNA damage</keyword>
<keyword id="KW-0233">DNA recombination</keyword>
<keyword id="KW-0238">DNA-binding</keyword>
<keyword id="KW-0547">Nucleotide-binding</keyword>
<keyword id="KW-0934">Plastid</keyword>
<keyword id="KW-1185">Reference proteome</keyword>
<keyword id="KW-0809">Transit peptide</keyword>
<reference key="1">
    <citation type="journal article" date="1993" name="Plant Physiol.">
        <title>Genomic nucleotide sequence of a gene from Arabidopsis thaliana encoding a protein homolog of Escherichia coli RecA.</title>
        <authorList>
            <person name="Binet M.N."/>
            <person name="Osman M."/>
            <person name="Jagendorf A.T."/>
        </authorList>
    </citation>
    <scope>NUCLEOTIDE SEQUENCE [GENOMIC DNA]</scope>
    <source>
        <strain>cv. Columbia</strain>
    </source>
</reference>
<reference key="2">
    <citation type="journal article" date="2000" name="Nature">
        <title>Sequence and analysis of chromosome 1 of the plant Arabidopsis thaliana.</title>
        <authorList>
            <person name="Theologis A."/>
            <person name="Ecker J.R."/>
            <person name="Palm C.J."/>
            <person name="Federspiel N.A."/>
            <person name="Kaul S."/>
            <person name="White O."/>
            <person name="Alonso J."/>
            <person name="Altafi H."/>
            <person name="Araujo R."/>
            <person name="Bowman C.L."/>
            <person name="Brooks S.Y."/>
            <person name="Buehler E."/>
            <person name="Chan A."/>
            <person name="Chao Q."/>
            <person name="Chen H."/>
            <person name="Cheuk R.F."/>
            <person name="Chin C.W."/>
            <person name="Chung M.K."/>
            <person name="Conn L."/>
            <person name="Conway A.B."/>
            <person name="Conway A.R."/>
            <person name="Creasy T.H."/>
            <person name="Dewar K."/>
            <person name="Dunn P."/>
            <person name="Etgu P."/>
            <person name="Feldblyum T.V."/>
            <person name="Feng J.-D."/>
            <person name="Fong B."/>
            <person name="Fujii C.Y."/>
            <person name="Gill J.E."/>
            <person name="Goldsmith A.D."/>
            <person name="Haas B."/>
            <person name="Hansen N.F."/>
            <person name="Hughes B."/>
            <person name="Huizar L."/>
            <person name="Hunter J.L."/>
            <person name="Jenkins J."/>
            <person name="Johnson-Hopson C."/>
            <person name="Khan S."/>
            <person name="Khaykin E."/>
            <person name="Kim C.J."/>
            <person name="Koo H.L."/>
            <person name="Kremenetskaia I."/>
            <person name="Kurtz D.B."/>
            <person name="Kwan A."/>
            <person name="Lam B."/>
            <person name="Langin-Hooper S."/>
            <person name="Lee A."/>
            <person name="Lee J.M."/>
            <person name="Lenz C.A."/>
            <person name="Li J.H."/>
            <person name="Li Y.-P."/>
            <person name="Lin X."/>
            <person name="Liu S.X."/>
            <person name="Liu Z.A."/>
            <person name="Luros J.S."/>
            <person name="Maiti R."/>
            <person name="Marziali A."/>
            <person name="Militscher J."/>
            <person name="Miranda M."/>
            <person name="Nguyen M."/>
            <person name="Nierman W.C."/>
            <person name="Osborne B.I."/>
            <person name="Pai G."/>
            <person name="Peterson J."/>
            <person name="Pham P.K."/>
            <person name="Rizzo M."/>
            <person name="Rooney T."/>
            <person name="Rowley D."/>
            <person name="Sakano H."/>
            <person name="Salzberg S.L."/>
            <person name="Schwartz J.R."/>
            <person name="Shinn P."/>
            <person name="Southwick A.M."/>
            <person name="Sun H."/>
            <person name="Tallon L.J."/>
            <person name="Tambunga G."/>
            <person name="Toriumi M.J."/>
            <person name="Town C.D."/>
            <person name="Utterback T."/>
            <person name="Van Aken S."/>
            <person name="Vaysberg M."/>
            <person name="Vysotskaia V.S."/>
            <person name="Walker M."/>
            <person name="Wu D."/>
            <person name="Yu G."/>
            <person name="Fraser C.M."/>
            <person name="Venter J.C."/>
            <person name="Davis R.W."/>
        </authorList>
    </citation>
    <scope>NUCLEOTIDE SEQUENCE [LARGE SCALE GENOMIC DNA]</scope>
    <source>
        <strain>cv. Columbia</strain>
    </source>
</reference>
<reference key="3">
    <citation type="journal article" date="2017" name="Plant J.">
        <title>Araport11: a complete reannotation of the Arabidopsis thaliana reference genome.</title>
        <authorList>
            <person name="Cheng C.Y."/>
            <person name="Krishnakumar V."/>
            <person name="Chan A.P."/>
            <person name="Thibaud-Nissen F."/>
            <person name="Schobel S."/>
            <person name="Town C.D."/>
        </authorList>
    </citation>
    <scope>GENOME REANNOTATION</scope>
    <source>
        <strain>cv. Columbia</strain>
    </source>
</reference>
<reference key="4">
    <citation type="journal article" date="2003" name="Science">
        <title>Empirical analysis of transcriptional activity in the Arabidopsis genome.</title>
        <authorList>
            <person name="Yamada K."/>
            <person name="Lim J."/>
            <person name="Dale J.M."/>
            <person name="Chen H."/>
            <person name="Shinn P."/>
            <person name="Palm C.J."/>
            <person name="Southwick A.M."/>
            <person name="Wu H.C."/>
            <person name="Kim C.J."/>
            <person name="Nguyen M."/>
            <person name="Pham P.K."/>
            <person name="Cheuk R.F."/>
            <person name="Karlin-Newmann G."/>
            <person name="Liu S.X."/>
            <person name="Lam B."/>
            <person name="Sakano H."/>
            <person name="Wu T."/>
            <person name="Yu G."/>
            <person name="Miranda M."/>
            <person name="Quach H.L."/>
            <person name="Tripp M."/>
            <person name="Chang C.H."/>
            <person name="Lee J.M."/>
            <person name="Toriumi M.J."/>
            <person name="Chan M.M."/>
            <person name="Tang C.C."/>
            <person name="Onodera C.S."/>
            <person name="Deng J.M."/>
            <person name="Akiyama K."/>
            <person name="Ansari Y."/>
            <person name="Arakawa T."/>
            <person name="Banh J."/>
            <person name="Banno F."/>
            <person name="Bowser L."/>
            <person name="Brooks S.Y."/>
            <person name="Carninci P."/>
            <person name="Chao Q."/>
            <person name="Choy N."/>
            <person name="Enju A."/>
            <person name="Goldsmith A.D."/>
            <person name="Gurjal M."/>
            <person name="Hansen N.F."/>
            <person name="Hayashizaki Y."/>
            <person name="Johnson-Hopson C."/>
            <person name="Hsuan V.W."/>
            <person name="Iida K."/>
            <person name="Karnes M."/>
            <person name="Khan S."/>
            <person name="Koesema E."/>
            <person name="Ishida J."/>
            <person name="Jiang P.X."/>
            <person name="Jones T."/>
            <person name="Kawai J."/>
            <person name="Kamiya A."/>
            <person name="Meyers C."/>
            <person name="Nakajima M."/>
            <person name="Narusaka M."/>
            <person name="Seki M."/>
            <person name="Sakurai T."/>
            <person name="Satou M."/>
            <person name="Tamse R."/>
            <person name="Vaysberg M."/>
            <person name="Wallender E.K."/>
            <person name="Wong C."/>
            <person name="Yamamura Y."/>
            <person name="Yuan S."/>
            <person name="Shinozaki K."/>
            <person name="Davis R.W."/>
            <person name="Theologis A."/>
            <person name="Ecker J.R."/>
        </authorList>
    </citation>
    <scope>NUCLEOTIDE SEQUENCE [LARGE SCALE MRNA]</scope>
    <source>
        <strain>cv. Columbia</strain>
    </source>
</reference>
<reference key="5">
    <citation type="journal article" date="1992" name="Proc. Natl. Acad. Sci. U.S.A.">
        <title>A homolog of Escherichia coli RecA protein in plastids of higher plants.</title>
        <authorList>
            <person name="Cerutti H.D."/>
            <person name="Osman M."/>
            <person name="Grandoni P."/>
            <person name="Jagendorf A.T."/>
        </authorList>
    </citation>
    <scope>NUCLEOTIDE SEQUENCE [MRNA] OF 2-439</scope>
    <source>
        <strain>cv. Columbia</strain>
    </source>
</reference>
<comment type="function">
    <text>Involved in recombination ability and DNA strand transfer activity.</text>
</comment>
<comment type="subcellular location">
    <subcellularLocation>
        <location>Plastid</location>
        <location>Chloroplast stroma</location>
    </subcellularLocation>
</comment>
<comment type="alternative products">
    <event type="alternative splicing"/>
    <isoform>
        <id>Q39199-1</id>
        <name>1</name>
        <sequence type="displayed"/>
    </isoform>
    <text>A number of isoforms are produced. According to EST sequences.</text>
</comment>
<comment type="similarity">
    <text evidence="3">Belongs to the RecA family.</text>
</comment>
<accession>Q39199</accession>
<accession>Q39200</accession>
<feature type="transit peptide" description="Chloroplast" evidence="1">
    <location>
        <begin position="1"/>
        <end position="52"/>
    </location>
</feature>
<feature type="chain" id="PRO_0000030275" description="DNA repair protein recA homolog 1, chloroplastic">
    <location>
        <begin position="53"/>
        <end position="439"/>
    </location>
</feature>
<feature type="region of interest" description="Disordered" evidence="2">
    <location>
        <begin position="413"/>
        <end position="439"/>
    </location>
</feature>
<feature type="compositionally biased region" description="Acidic residues" evidence="2">
    <location>
        <begin position="429"/>
        <end position="439"/>
    </location>
</feature>
<feature type="binding site" evidence="1">
    <location>
        <begin position="142"/>
        <end position="149"/>
    </location>
    <ligand>
        <name>ATP</name>
        <dbReference type="ChEBI" id="CHEBI:30616"/>
    </ligand>
</feature>
<gene>
    <name type="primary">RECA</name>
    <name type="ordered locus">At1g79050</name>
    <name type="ORF">YUP8H12R.33</name>
    <name type="ORF">YUP8H12R_18</name>
</gene>
<name>RECAC_ARATH</name>